<keyword id="KW-0067">ATP-binding</keyword>
<keyword id="KW-0963">Cytoplasm</keyword>
<keyword id="KW-0418">Kinase</keyword>
<keyword id="KW-0460">Magnesium</keyword>
<keyword id="KW-0479">Metal-binding</keyword>
<keyword id="KW-0545">Nucleotide biosynthesis</keyword>
<keyword id="KW-0547">Nucleotide-binding</keyword>
<keyword id="KW-0808">Transferase</keyword>
<evidence type="ECO:0000255" key="1">
    <source>
        <dbReference type="HAMAP-Rule" id="MF_00583"/>
    </source>
</evidence>
<evidence type="ECO:0000305" key="2"/>
<protein>
    <recommendedName>
        <fullName evidence="1">Ribose-phosphate pyrophosphokinase</fullName>
        <shortName evidence="1">RPPK</shortName>
        <ecNumber evidence="1">2.7.6.1</ecNumber>
    </recommendedName>
    <alternativeName>
        <fullName evidence="1">5-phospho-D-ribosyl alpha-1-diphosphate synthase</fullName>
    </alternativeName>
    <alternativeName>
        <fullName evidence="1">Phosphoribosyl diphosphate synthase</fullName>
    </alternativeName>
    <alternativeName>
        <fullName evidence="1">Phosphoribosyl pyrophosphate synthase</fullName>
        <shortName evidence="1">P-Rib-PP synthase</shortName>
        <shortName evidence="1">PRPP synthase</shortName>
        <shortName evidence="1">PRPPase</shortName>
    </alternativeName>
</protein>
<dbReference type="EC" id="2.7.6.1" evidence="1"/>
<dbReference type="EMBL" id="AE008923">
    <property type="protein sequence ID" value="AAM35837.1"/>
    <property type="status" value="ALT_INIT"/>
    <property type="molecule type" value="Genomic_DNA"/>
</dbReference>
<dbReference type="RefSeq" id="WP_003486761.1">
    <property type="nucleotide sequence ID" value="NC_003919.1"/>
</dbReference>
<dbReference type="SMR" id="Q8PNU0"/>
<dbReference type="KEGG" id="xac:XAC0950"/>
<dbReference type="eggNOG" id="COG0462">
    <property type="taxonomic scope" value="Bacteria"/>
</dbReference>
<dbReference type="HOGENOM" id="CLU_033546_2_0_6"/>
<dbReference type="UniPathway" id="UPA00087">
    <property type="reaction ID" value="UER00172"/>
</dbReference>
<dbReference type="Proteomes" id="UP000000576">
    <property type="component" value="Chromosome"/>
</dbReference>
<dbReference type="GO" id="GO:0005737">
    <property type="term" value="C:cytoplasm"/>
    <property type="evidence" value="ECO:0007669"/>
    <property type="project" value="UniProtKB-SubCell"/>
</dbReference>
<dbReference type="GO" id="GO:0002189">
    <property type="term" value="C:ribose phosphate diphosphokinase complex"/>
    <property type="evidence" value="ECO:0007669"/>
    <property type="project" value="TreeGrafter"/>
</dbReference>
<dbReference type="GO" id="GO:0005524">
    <property type="term" value="F:ATP binding"/>
    <property type="evidence" value="ECO:0007669"/>
    <property type="project" value="UniProtKB-KW"/>
</dbReference>
<dbReference type="GO" id="GO:0016301">
    <property type="term" value="F:kinase activity"/>
    <property type="evidence" value="ECO:0007669"/>
    <property type="project" value="UniProtKB-KW"/>
</dbReference>
<dbReference type="GO" id="GO:0000287">
    <property type="term" value="F:magnesium ion binding"/>
    <property type="evidence" value="ECO:0007669"/>
    <property type="project" value="UniProtKB-UniRule"/>
</dbReference>
<dbReference type="GO" id="GO:0004749">
    <property type="term" value="F:ribose phosphate diphosphokinase activity"/>
    <property type="evidence" value="ECO:0007669"/>
    <property type="project" value="UniProtKB-UniRule"/>
</dbReference>
<dbReference type="GO" id="GO:0006015">
    <property type="term" value="P:5-phosphoribose 1-diphosphate biosynthetic process"/>
    <property type="evidence" value="ECO:0007669"/>
    <property type="project" value="UniProtKB-UniRule"/>
</dbReference>
<dbReference type="GO" id="GO:0006164">
    <property type="term" value="P:purine nucleotide biosynthetic process"/>
    <property type="evidence" value="ECO:0007669"/>
    <property type="project" value="TreeGrafter"/>
</dbReference>
<dbReference type="GO" id="GO:0009156">
    <property type="term" value="P:ribonucleoside monophosphate biosynthetic process"/>
    <property type="evidence" value="ECO:0007669"/>
    <property type="project" value="InterPro"/>
</dbReference>
<dbReference type="CDD" id="cd06223">
    <property type="entry name" value="PRTases_typeI"/>
    <property type="match status" value="1"/>
</dbReference>
<dbReference type="FunFam" id="3.40.50.2020:FF:000001">
    <property type="entry name" value="Ribose-phosphate pyrophosphokinase"/>
    <property type="match status" value="1"/>
</dbReference>
<dbReference type="Gene3D" id="3.40.50.2020">
    <property type="match status" value="2"/>
</dbReference>
<dbReference type="HAMAP" id="MF_00583_B">
    <property type="entry name" value="RibP_PPkinase_B"/>
    <property type="match status" value="1"/>
</dbReference>
<dbReference type="InterPro" id="IPR000842">
    <property type="entry name" value="PRib_PP_synth_CS"/>
</dbReference>
<dbReference type="InterPro" id="IPR029099">
    <property type="entry name" value="Pribosyltran_N"/>
</dbReference>
<dbReference type="InterPro" id="IPR000836">
    <property type="entry name" value="PRibTrfase_dom"/>
</dbReference>
<dbReference type="InterPro" id="IPR029057">
    <property type="entry name" value="PRTase-like"/>
</dbReference>
<dbReference type="InterPro" id="IPR005946">
    <property type="entry name" value="Rib-P_diPkinase"/>
</dbReference>
<dbReference type="InterPro" id="IPR037515">
    <property type="entry name" value="Rib-P_diPkinase_bac"/>
</dbReference>
<dbReference type="NCBIfam" id="NF002320">
    <property type="entry name" value="PRK01259.1"/>
    <property type="match status" value="1"/>
</dbReference>
<dbReference type="NCBIfam" id="NF003428">
    <property type="entry name" value="PRK04923.1"/>
    <property type="match status" value="1"/>
</dbReference>
<dbReference type="NCBIfam" id="TIGR01251">
    <property type="entry name" value="ribP_PPkin"/>
    <property type="match status" value="1"/>
</dbReference>
<dbReference type="PANTHER" id="PTHR10210">
    <property type="entry name" value="RIBOSE-PHOSPHATE DIPHOSPHOKINASE FAMILY MEMBER"/>
    <property type="match status" value="1"/>
</dbReference>
<dbReference type="PANTHER" id="PTHR10210:SF41">
    <property type="entry name" value="RIBOSE-PHOSPHATE PYROPHOSPHOKINASE 1, CHLOROPLASTIC"/>
    <property type="match status" value="1"/>
</dbReference>
<dbReference type="Pfam" id="PF14572">
    <property type="entry name" value="Pribosyl_synth"/>
    <property type="match status" value="1"/>
</dbReference>
<dbReference type="Pfam" id="PF13793">
    <property type="entry name" value="Pribosyltran_N"/>
    <property type="match status" value="1"/>
</dbReference>
<dbReference type="SMART" id="SM01400">
    <property type="entry name" value="Pribosyltran_N"/>
    <property type="match status" value="1"/>
</dbReference>
<dbReference type="SUPFAM" id="SSF53271">
    <property type="entry name" value="PRTase-like"/>
    <property type="match status" value="1"/>
</dbReference>
<dbReference type="PROSITE" id="PS00114">
    <property type="entry name" value="PRPP_SYNTHASE"/>
    <property type="match status" value="1"/>
</dbReference>
<accession>Q8PNU0</accession>
<gene>
    <name evidence="1" type="primary">prs</name>
    <name type="synonym">prsA</name>
    <name type="ordered locus">XAC0950</name>
</gene>
<proteinExistence type="inferred from homology"/>
<comment type="function">
    <text evidence="1">Involved in the biosynthesis of the central metabolite phospho-alpha-D-ribosyl-1-pyrophosphate (PRPP) via the transfer of pyrophosphoryl group from ATP to 1-hydroxyl of ribose-5-phosphate (Rib-5-P).</text>
</comment>
<comment type="catalytic activity">
    <reaction evidence="1">
        <text>D-ribose 5-phosphate + ATP = 5-phospho-alpha-D-ribose 1-diphosphate + AMP + H(+)</text>
        <dbReference type="Rhea" id="RHEA:15609"/>
        <dbReference type="ChEBI" id="CHEBI:15378"/>
        <dbReference type="ChEBI" id="CHEBI:30616"/>
        <dbReference type="ChEBI" id="CHEBI:58017"/>
        <dbReference type="ChEBI" id="CHEBI:78346"/>
        <dbReference type="ChEBI" id="CHEBI:456215"/>
        <dbReference type="EC" id="2.7.6.1"/>
    </reaction>
</comment>
<comment type="cofactor">
    <cofactor evidence="1">
        <name>Mg(2+)</name>
        <dbReference type="ChEBI" id="CHEBI:18420"/>
    </cofactor>
    <text evidence="1">Binds 2 Mg(2+) ions per subunit.</text>
</comment>
<comment type="pathway">
    <text evidence="1">Metabolic intermediate biosynthesis; 5-phospho-alpha-D-ribose 1-diphosphate biosynthesis; 5-phospho-alpha-D-ribose 1-diphosphate from D-ribose 5-phosphate (route I): step 1/1.</text>
</comment>
<comment type="subunit">
    <text evidence="1">Homohexamer.</text>
</comment>
<comment type="subcellular location">
    <subcellularLocation>
        <location evidence="1">Cytoplasm</location>
    </subcellularLocation>
</comment>
<comment type="similarity">
    <text evidence="1">Belongs to the ribose-phosphate pyrophosphokinase family. Class I subfamily.</text>
</comment>
<comment type="sequence caution" evidence="2">
    <conflict type="erroneous initiation">
        <sequence resource="EMBL-CDS" id="AAM35837"/>
    </conflict>
    <text>Truncated N-terminus.</text>
</comment>
<sequence length="319" mass="34603">MQDQRNLLVFSGNANKPLAQSICKELGVRMGKALVTRFSDGEVQVEIEESVRRQEVFVIQPTCAPSAENLMELLVLIDALKRASAQSVTAVIPYFGYSRQDRRMRSSRVPITAKVAAKMICAMEADRVLTVDLHADQIQGFFDVPVDNVYASPLLLADIWRAYGTDNLIVVSPDVGGVVRARAVAKRLDDADLAIIDKRRPRANVATVMNIIGDVQGKTCVLVDDLVDTAGTLCAAAAALKQRGALKVVAYITHPVLSGPAVDNINNSQLDELVVTDTIPLSEAARTCAKIRQLSVAELLAETIRRIAFGESVSSLYVD</sequence>
<name>KPRS_XANAC</name>
<reference key="1">
    <citation type="journal article" date="2002" name="Nature">
        <title>Comparison of the genomes of two Xanthomonas pathogens with differing host specificities.</title>
        <authorList>
            <person name="da Silva A.C.R."/>
            <person name="Ferro J.A."/>
            <person name="Reinach F.C."/>
            <person name="Farah C.S."/>
            <person name="Furlan L.R."/>
            <person name="Quaggio R.B."/>
            <person name="Monteiro-Vitorello C.B."/>
            <person name="Van Sluys M.A."/>
            <person name="Almeida N.F. Jr."/>
            <person name="Alves L.M.C."/>
            <person name="do Amaral A.M."/>
            <person name="Bertolini M.C."/>
            <person name="Camargo L.E.A."/>
            <person name="Camarotte G."/>
            <person name="Cannavan F."/>
            <person name="Cardozo J."/>
            <person name="Chambergo F."/>
            <person name="Ciapina L.P."/>
            <person name="Cicarelli R.M.B."/>
            <person name="Coutinho L.L."/>
            <person name="Cursino-Santos J.R."/>
            <person name="El-Dorry H."/>
            <person name="Faria J.B."/>
            <person name="Ferreira A.J.S."/>
            <person name="Ferreira R.C.C."/>
            <person name="Ferro M.I.T."/>
            <person name="Formighieri E.F."/>
            <person name="Franco M.C."/>
            <person name="Greggio C.C."/>
            <person name="Gruber A."/>
            <person name="Katsuyama A.M."/>
            <person name="Kishi L.T."/>
            <person name="Leite R.P."/>
            <person name="Lemos E.G.M."/>
            <person name="Lemos M.V.F."/>
            <person name="Locali E.C."/>
            <person name="Machado M.A."/>
            <person name="Madeira A.M.B.N."/>
            <person name="Martinez-Rossi N.M."/>
            <person name="Martins E.C."/>
            <person name="Meidanis J."/>
            <person name="Menck C.F.M."/>
            <person name="Miyaki C.Y."/>
            <person name="Moon D.H."/>
            <person name="Moreira L.M."/>
            <person name="Novo M.T.M."/>
            <person name="Okura V.K."/>
            <person name="Oliveira M.C."/>
            <person name="Oliveira V.R."/>
            <person name="Pereira H.A."/>
            <person name="Rossi A."/>
            <person name="Sena J.A.D."/>
            <person name="Silva C."/>
            <person name="de Souza R.F."/>
            <person name="Spinola L.A.F."/>
            <person name="Takita M.A."/>
            <person name="Tamura R.E."/>
            <person name="Teixeira E.C."/>
            <person name="Tezza R.I.D."/>
            <person name="Trindade dos Santos M."/>
            <person name="Truffi D."/>
            <person name="Tsai S.M."/>
            <person name="White F.F."/>
            <person name="Setubal J.C."/>
            <person name="Kitajima J.P."/>
        </authorList>
    </citation>
    <scope>NUCLEOTIDE SEQUENCE [LARGE SCALE GENOMIC DNA]</scope>
    <source>
        <strain>306</strain>
    </source>
</reference>
<feature type="chain" id="PRO_0000141227" description="Ribose-phosphate pyrophosphokinase">
    <location>
        <begin position="1"/>
        <end position="319"/>
    </location>
</feature>
<feature type="active site" evidence="1">
    <location>
        <position position="198"/>
    </location>
</feature>
<feature type="binding site" evidence="1">
    <location>
        <begin position="40"/>
        <end position="42"/>
    </location>
    <ligand>
        <name>ATP</name>
        <dbReference type="ChEBI" id="CHEBI:30616"/>
    </ligand>
</feature>
<feature type="binding site" evidence="1">
    <location>
        <begin position="99"/>
        <end position="100"/>
    </location>
    <ligand>
        <name>ATP</name>
        <dbReference type="ChEBI" id="CHEBI:30616"/>
    </ligand>
</feature>
<feature type="binding site" evidence="1">
    <location>
        <position position="134"/>
    </location>
    <ligand>
        <name>Mg(2+)</name>
        <dbReference type="ChEBI" id="CHEBI:18420"/>
        <label>1</label>
    </ligand>
</feature>
<feature type="binding site" evidence="1">
    <location>
        <position position="174"/>
    </location>
    <ligand>
        <name>Mg(2+)</name>
        <dbReference type="ChEBI" id="CHEBI:18420"/>
        <label>2</label>
    </ligand>
</feature>
<feature type="binding site" evidence="1">
    <location>
        <position position="200"/>
    </location>
    <ligand>
        <name>D-ribose 5-phosphate</name>
        <dbReference type="ChEBI" id="CHEBI:78346"/>
    </ligand>
</feature>
<feature type="binding site" evidence="1">
    <location>
        <position position="224"/>
    </location>
    <ligand>
        <name>D-ribose 5-phosphate</name>
        <dbReference type="ChEBI" id="CHEBI:78346"/>
    </ligand>
</feature>
<feature type="binding site" evidence="1">
    <location>
        <begin position="228"/>
        <end position="232"/>
    </location>
    <ligand>
        <name>D-ribose 5-phosphate</name>
        <dbReference type="ChEBI" id="CHEBI:78346"/>
    </ligand>
</feature>
<organism>
    <name type="scientific">Xanthomonas axonopodis pv. citri (strain 306)</name>
    <dbReference type="NCBI Taxonomy" id="190486"/>
    <lineage>
        <taxon>Bacteria</taxon>
        <taxon>Pseudomonadati</taxon>
        <taxon>Pseudomonadota</taxon>
        <taxon>Gammaproteobacteria</taxon>
        <taxon>Lysobacterales</taxon>
        <taxon>Lysobacteraceae</taxon>
        <taxon>Xanthomonas</taxon>
    </lineage>
</organism>